<accession>B8IN87</accession>
<organism>
    <name type="scientific">Methylobacterium nodulans (strain LMG 21967 / CNCM I-2342 / ORS 2060)</name>
    <dbReference type="NCBI Taxonomy" id="460265"/>
    <lineage>
        <taxon>Bacteria</taxon>
        <taxon>Pseudomonadati</taxon>
        <taxon>Pseudomonadota</taxon>
        <taxon>Alphaproteobacteria</taxon>
        <taxon>Hyphomicrobiales</taxon>
        <taxon>Methylobacteriaceae</taxon>
        <taxon>Methylobacterium</taxon>
    </lineage>
</organism>
<gene>
    <name evidence="1" type="primary">lexA</name>
    <name type="ordered locus">Mnod_7466</name>
</gene>
<evidence type="ECO:0000255" key="1">
    <source>
        <dbReference type="HAMAP-Rule" id="MF_00015"/>
    </source>
</evidence>
<keyword id="KW-0068">Autocatalytic cleavage</keyword>
<keyword id="KW-0227">DNA damage</keyword>
<keyword id="KW-0234">DNA repair</keyword>
<keyword id="KW-0235">DNA replication</keyword>
<keyword id="KW-0238">DNA-binding</keyword>
<keyword id="KW-0378">Hydrolase</keyword>
<keyword id="KW-1185">Reference proteome</keyword>
<keyword id="KW-0678">Repressor</keyword>
<keyword id="KW-0742">SOS response</keyword>
<keyword id="KW-0804">Transcription</keyword>
<keyword id="KW-0805">Transcription regulation</keyword>
<dbReference type="EC" id="3.4.21.88" evidence="1"/>
<dbReference type="EMBL" id="CP001349">
    <property type="protein sequence ID" value="ACL62203.1"/>
    <property type="molecule type" value="Genomic_DNA"/>
</dbReference>
<dbReference type="RefSeq" id="WP_015933761.1">
    <property type="nucleotide sequence ID" value="NC_011894.1"/>
</dbReference>
<dbReference type="SMR" id="B8IN87"/>
<dbReference type="STRING" id="460265.Mnod_7466"/>
<dbReference type="MEROPS" id="S24.001"/>
<dbReference type="KEGG" id="mno:Mnod_7466"/>
<dbReference type="eggNOG" id="COG1974">
    <property type="taxonomic scope" value="Bacteria"/>
</dbReference>
<dbReference type="HOGENOM" id="CLU_066192_45_2_5"/>
<dbReference type="OrthoDB" id="9802364at2"/>
<dbReference type="Proteomes" id="UP000008207">
    <property type="component" value="Chromosome"/>
</dbReference>
<dbReference type="GO" id="GO:0003677">
    <property type="term" value="F:DNA binding"/>
    <property type="evidence" value="ECO:0007669"/>
    <property type="project" value="UniProtKB-UniRule"/>
</dbReference>
<dbReference type="GO" id="GO:0004252">
    <property type="term" value="F:serine-type endopeptidase activity"/>
    <property type="evidence" value="ECO:0007669"/>
    <property type="project" value="UniProtKB-UniRule"/>
</dbReference>
<dbReference type="GO" id="GO:0006281">
    <property type="term" value="P:DNA repair"/>
    <property type="evidence" value="ECO:0007669"/>
    <property type="project" value="UniProtKB-UniRule"/>
</dbReference>
<dbReference type="GO" id="GO:0006260">
    <property type="term" value="P:DNA replication"/>
    <property type="evidence" value="ECO:0007669"/>
    <property type="project" value="UniProtKB-UniRule"/>
</dbReference>
<dbReference type="GO" id="GO:0045892">
    <property type="term" value="P:negative regulation of DNA-templated transcription"/>
    <property type="evidence" value="ECO:0007669"/>
    <property type="project" value="UniProtKB-UniRule"/>
</dbReference>
<dbReference type="GO" id="GO:0006508">
    <property type="term" value="P:proteolysis"/>
    <property type="evidence" value="ECO:0007669"/>
    <property type="project" value="InterPro"/>
</dbReference>
<dbReference type="GO" id="GO:0009432">
    <property type="term" value="P:SOS response"/>
    <property type="evidence" value="ECO:0007669"/>
    <property type="project" value="UniProtKB-UniRule"/>
</dbReference>
<dbReference type="CDD" id="cd06529">
    <property type="entry name" value="S24_LexA-like"/>
    <property type="match status" value="1"/>
</dbReference>
<dbReference type="FunFam" id="2.10.109.10:FF:000001">
    <property type="entry name" value="LexA repressor"/>
    <property type="match status" value="1"/>
</dbReference>
<dbReference type="Gene3D" id="2.10.109.10">
    <property type="entry name" value="Umud Fragment, subunit A"/>
    <property type="match status" value="1"/>
</dbReference>
<dbReference type="Gene3D" id="1.10.10.10">
    <property type="entry name" value="Winged helix-like DNA-binding domain superfamily/Winged helix DNA-binding domain"/>
    <property type="match status" value="1"/>
</dbReference>
<dbReference type="HAMAP" id="MF_00015">
    <property type="entry name" value="LexA"/>
    <property type="match status" value="1"/>
</dbReference>
<dbReference type="InterPro" id="IPR006200">
    <property type="entry name" value="LexA"/>
</dbReference>
<dbReference type="InterPro" id="IPR039418">
    <property type="entry name" value="LexA-like"/>
</dbReference>
<dbReference type="InterPro" id="IPR036286">
    <property type="entry name" value="LexA/Signal_pep-like_sf"/>
</dbReference>
<dbReference type="InterPro" id="IPR006199">
    <property type="entry name" value="LexA_DNA-bd_dom"/>
</dbReference>
<dbReference type="InterPro" id="IPR050077">
    <property type="entry name" value="LexA_repressor"/>
</dbReference>
<dbReference type="InterPro" id="IPR006197">
    <property type="entry name" value="Peptidase_S24_LexA"/>
</dbReference>
<dbReference type="InterPro" id="IPR015927">
    <property type="entry name" value="Peptidase_S24_S26A/B/C"/>
</dbReference>
<dbReference type="InterPro" id="IPR036388">
    <property type="entry name" value="WH-like_DNA-bd_sf"/>
</dbReference>
<dbReference type="InterPro" id="IPR036390">
    <property type="entry name" value="WH_DNA-bd_sf"/>
</dbReference>
<dbReference type="NCBIfam" id="TIGR00498">
    <property type="entry name" value="lexA"/>
    <property type="match status" value="1"/>
</dbReference>
<dbReference type="PANTHER" id="PTHR33516">
    <property type="entry name" value="LEXA REPRESSOR"/>
    <property type="match status" value="1"/>
</dbReference>
<dbReference type="PANTHER" id="PTHR33516:SF2">
    <property type="entry name" value="LEXA REPRESSOR-RELATED"/>
    <property type="match status" value="1"/>
</dbReference>
<dbReference type="Pfam" id="PF01726">
    <property type="entry name" value="LexA_DNA_bind"/>
    <property type="match status" value="1"/>
</dbReference>
<dbReference type="Pfam" id="PF00717">
    <property type="entry name" value="Peptidase_S24"/>
    <property type="match status" value="1"/>
</dbReference>
<dbReference type="PRINTS" id="PR00726">
    <property type="entry name" value="LEXASERPTASE"/>
</dbReference>
<dbReference type="SUPFAM" id="SSF51306">
    <property type="entry name" value="LexA/Signal peptidase"/>
    <property type="match status" value="1"/>
</dbReference>
<dbReference type="SUPFAM" id="SSF46785">
    <property type="entry name" value="Winged helix' DNA-binding domain"/>
    <property type="match status" value="1"/>
</dbReference>
<reference key="1">
    <citation type="submission" date="2009-01" db="EMBL/GenBank/DDBJ databases">
        <title>Complete sequence of chromosome of Methylobacterium nodulans ORS 2060.</title>
        <authorList>
            <consortium name="US DOE Joint Genome Institute"/>
            <person name="Lucas S."/>
            <person name="Copeland A."/>
            <person name="Lapidus A."/>
            <person name="Glavina del Rio T."/>
            <person name="Dalin E."/>
            <person name="Tice H."/>
            <person name="Bruce D."/>
            <person name="Goodwin L."/>
            <person name="Pitluck S."/>
            <person name="Sims D."/>
            <person name="Brettin T."/>
            <person name="Detter J.C."/>
            <person name="Han C."/>
            <person name="Larimer F."/>
            <person name="Land M."/>
            <person name="Hauser L."/>
            <person name="Kyrpides N."/>
            <person name="Ivanova N."/>
            <person name="Marx C.J."/>
            <person name="Richardson P."/>
        </authorList>
    </citation>
    <scope>NUCLEOTIDE SEQUENCE [LARGE SCALE GENOMIC DNA]</scope>
    <source>
        <strain>LMG 21967 / CNCM I-2342 / ORS 2060</strain>
    </source>
</reference>
<comment type="function">
    <text evidence="1">Represses a number of genes involved in the response to DNA damage (SOS response), including recA and lexA. In the presence of single-stranded DNA, RecA interacts with LexA causing an autocatalytic cleavage which disrupts the DNA-binding part of LexA, leading to derepression of the SOS regulon and eventually DNA repair.</text>
</comment>
<comment type="catalytic activity">
    <reaction evidence="1">
        <text>Hydrolysis of Ala-|-Gly bond in repressor LexA.</text>
        <dbReference type="EC" id="3.4.21.88"/>
    </reaction>
</comment>
<comment type="subunit">
    <text evidence="1">Homodimer.</text>
</comment>
<comment type="similarity">
    <text evidence="1">Belongs to the peptidase S24 family.</text>
</comment>
<sequence>MLTRKQLDLLRFIQQRMRETGVPPSFDEMKDALDLKSKSGIHRLITALEERGFLRRLPNRARAIEVIRIPDAVVPPSGEVVRFTPSVVEGGRTAAPAAKAAPMPSSLGSDDNGRSISIPVMGRIAAGTPISAIQSQSRTVAMSPDFLAGGEHYALEVRGDSMIEAGILDGDLVVIRRQDTANTGDIVVALIDDEEATLKRLRRRGSSIALEAANPAYETRVLGPDRVRIQGRLVSLIRKY</sequence>
<name>LEXA_METNO</name>
<proteinExistence type="inferred from homology"/>
<protein>
    <recommendedName>
        <fullName evidence="1">LexA repressor</fullName>
        <ecNumber evidence="1">3.4.21.88</ecNumber>
    </recommendedName>
</protein>
<feature type="chain" id="PRO_1000116609" description="LexA repressor">
    <location>
        <begin position="1"/>
        <end position="240"/>
    </location>
</feature>
<feature type="DNA-binding region" description="H-T-H motif" evidence="1">
    <location>
        <begin position="26"/>
        <end position="46"/>
    </location>
</feature>
<feature type="active site" description="For autocatalytic cleavage activity" evidence="1">
    <location>
        <position position="161"/>
    </location>
</feature>
<feature type="active site" description="For autocatalytic cleavage activity" evidence="1">
    <location>
        <position position="199"/>
    </location>
</feature>
<feature type="site" description="Cleavage; by autolysis" evidence="1">
    <location>
        <begin position="126"/>
        <end position="127"/>
    </location>
</feature>